<proteinExistence type="evidence at protein level"/>
<comment type="function">
    <text evidence="1">Transcription factor which plays a key role in the Hippo signaling pathway, a pathway involved in organ size control and tumor suppression by restricting proliferation and promoting apoptosis. The core of this pathway is composed of a kinase cascade wherein MST1/MST2, in complex with its regulatory protein SAV1, phosphorylates and activates LATS1/2 in complex with its regulatory protein MOB1, which in turn phosphorylates and inactivates YAP1 oncoprotein and WWTR1/TAZ. Acts by mediating gene expression of YAP1 and WWTR1/TAZ, thereby regulating cell proliferation, migration and epithelial mesenchymal transition (EMT) induction (By similarity).</text>
</comment>
<comment type="subunit">
    <text evidence="1">Interacts with YAP1 and WWTR1/TAZ.</text>
</comment>
<comment type="subcellular location">
    <subcellularLocation>
        <location>Nucleus</location>
    </subcellularLocation>
</comment>
<comment type="tissue specificity">
    <text>Expressed in embryos as well as in many adult tissues.</text>
</comment>
<comment type="sequence caution" evidence="6">
    <conflict type="miscellaneous discrepancy">
        <sequence resource="EMBL-CDS" id="AAC12263"/>
    </conflict>
    <text>Unusual initiator. The initiator methionine is coded by a non-canonical ATA isoleucine codon.</text>
</comment>
<comment type="sequence caution" evidence="6">
    <conflict type="miscellaneous discrepancy">
        <sequence resource="EMBL-CDS" id="BAA13517"/>
    </conflict>
    <text>Unusual initiator. The initiator methionine is coded by a non-canonical ATA isoleucine codon.</text>
</comment>
<comment type="sequence caution" evidence="6">
    <conflict type="erroneous initiation">
        <sequence resource="EMBL-CDS" id="CAA71136"/>
    </conflict>
    <text>Extended N-terminus.</text>
</comment>
<comment type="sequence caution" evidence="6">
    <conflict type="miscellaneous discrepancy">
        <sequence resource="EMBL-CDS" id="CAA71136"/>
    </conflict>
    <text>Unusual initiator. The initiator methionine is coded by a non-canonical ATA isoleucine codon.</text>
</comment>
<name>TEAD3_MOUSE</name>
<evidence type="ECO:0000250" key="1"/>
<evidence type="ECO:0000250" key="2">
    <source>
        <dbReference type="UniProtKB" id="Q99594"/>
    </source>
</evidence>
<evidence type="ECO:0000255" key="3"/>
<evidence type="ECO:0000255" key="4">
    <source>
        <dbReference type="PROSITE-ProRule" id="PRU00505"/>
    </source>
</evidence>
<evidence type="ECO:0000256" key="5">
    <source>
        <dbReference type="SAM" id="MobiDB-lite"/>
    </source>
</evidence>
<evidence type="ECO:0000305" key="6"/>
<accession>P70210</accession>
<accession>O08516</accession>
<accession>O70623</accession>
<accession>P70209</accession>
<keyword id="KW-0002">3D-structure</keyword>
<keyword id="KW-0007">Acetylation</keyword>
<keyword id="KW-0238">DNA-binding</keyword>
<keyword id="KW-0539">Nucleus</keyword>
<keyword id="KW-0597">Phosphoprotein</keyword>
<keyword id="KW-1185">Reference proteome</keyword>
<keyword id="KW-0804">Transcription</keyword>
<keyword id="KW-0805">Transcription regulation</keyword>
<sequence>MASNSWTANSSPGEAREDGSEGLDKGLDNDAEGVWSPDIEQSFQEALAIYPPCGRRKIILSDEGKMYGRNELIARYIKLRTGKTRTRKQVSSHIQVLARKKVREYQVGIKAMNLDQVSKDKALQSMASMSSAQIVSASVLQNKFSPPSPLPQAVFSSSSRFWSSPPLLGQQPGPSQDIKPFAQPAYPIQPPLPPALNSYESLAPLPPAAASATASAPAWQDRTIASSRLRLLEYSAFMEVQRDPDTYSKHLFVHIGQTNPAFSDPPLEAVDVRQIYDKFPEKKGGLKELYEKGPPNAFFLVKFWADLNSTIQEGPGAFYGVSSQYSSADSMTISVSTKVCSFGKQVVEKVETEYARLENGRFVYRIHRSPMCEYMINFIHKLKHLPEKYMMNSVLENFTILQVVTSRDSQETLLVIAFVFEVSTSEHGAQHHVYKLVKD</sequence>
<dbReference type="EMBL" id="D87964">
    <property type="protein sequence ID" value="BAA13517.1"/>
    <property type="status" value="ALT_SEQ"/>
    <property type="molecule type" value="mRNA"/>
</dbReference>
<dbReference type="EMBL" id="D87963">
    <property type="protein sequence ID" value="BAA13516.1"/>
    <property type="molecule type" value="mRNA"/>
</dbReference>
<dbReference type="EMBL" id="Y10027">
    <property type="protein sequence ID" value="CAA71136.1"/>
    <property type="status" value="ALT_SEQ"/>
    <property type="molecule type" value="mRNA"/>
</dbReference>
<dbReference type="EMBL" id="AF002670">
    <property type="protein sequence ID" value="AAC12263.1"/>
    <property type="status" value="ALT_SEQ"/>
    <property type="molecule type" value="mRNA"/>
</dbReference>
<dbReference type="EMBL" id="Y16611">
    <property type="protein sequence ID" value="CAA76315.2"/>
    <property type="molecule type" value="mRNA"/>
</dbReference>
<dbReference type="CCDS" id="CCDS28577.3"/>
<dbReference type="RefSeq" id="NP_001091696.2">
    <property type="nucleotide sequence ID" value="NM_001098226.3"/>
</dbReference>
<dbReference type="RefSeq" id="NP_001191085.1">
    <property type="nucleotide sequence ID" value="NM_001204156.1"/>
</dbReference>
<dbReference type="RefSeq" id="NP_035696.3">
    <property type="nucleotide sequence ID" value="NM_011566.4"/>
</dbReference>
<dbReference type="PDB" id="8A0U">
    <property type="method" value="X-ray"/>
    <property type="resolution" value="2.90 A"/>
    <property type="chains" value="A/B/C/D=222-439"/>
</dbReference>
<dbReference type="PDB" id="8A0V">
    <property type="method" value="X-ray"/>
    <property type="resolution" value="2.70 A"/>
    <property type="chains" value="A/B/C/D=222-439"/>
</dbReference>
<dbReference type="PDBsum" id="8A0U"/>
<dbReference type="PDBsum" id="8A0V"/>
<dbReference type="SMR" id="P70210"/>
<dbReference type="BioGRID" id="204100">
    <property type="interactions" value="2"/>
</dbReference>
<dbReference type="CORUM" id="P70210"/>
<dbReference type="FunCoup" id="P70210">
    <property type="interactions" value="295"/>
</dbReference>
<dbReference type="IntAct" id="P70210">
    <property type="interactions" value="1"/>
</dbReference>
<dbReference type="STRING" id="10090.ENSMUSP00000110447"/>
<dbReference type="iPTMnet" id="P70210"/>
<dbReference type="PhosphoSitePlus" id="P70210"/>
<dbReference type="SwissPalm" id="P70210"/>
<dbReference type="jPOST" id="P70210"/>
<dbReference type="PaxDb" id="10090-ENSMUSP00000110447"/>
<dbReference type="ProteomicsDB" id="254691"/>
<dbReference type="Pumba" id="P70210"/>
<dbReference type="Antibodypedia" id="6662">
    <property type="antibodies" value="263 antibodies from 31 providers"/>
</dbReference>
<dbReference type="DNASU" id="21678"/>
<dbReference type="Ensembl" id="ENSMUST00000154873.9">
    <property type="protein sequence ID" value="ENSMUSP00000118582.3"/>
    <property type="gene ID" value="ENSMUSG00000002249.22"/>
</dbReference>
<dbReference type="Ensembl" id="ENSMUST00000156862.3">
    <property type="protein sequence ID" value="ENSMUSP00000115443.3"/>
    <property type="gene ID" value="ENSMUSG00000002249.22"/>
</dbReference>
<dbReference type="GeneID" id="21678"/>
<dbReference type="KEGG" id="mmu:21678"/>
<dbReference type="UCSC" id="uc008bqr.2">
    <property type="organism name" value="mouse"/>
</dbReference>
<dbReference type="AGR" id="MGI:109241"/>
<dbReference type="CTD" id="7005"/>
<dbReference type="MGI" id="MGI:109241">
    <property type="gene designation" value="Tead3"/>
</dbReference>
<dbReference type="eggNOG" id="KOG3841">
    <property type="taxonomic scope" value="Eukaryota"/>
</dbReference>
<dbReference type="GeneTree" id="ENSGT00950000182956"/>
<dbReference type="InParanoid" id="P70210"/>
<dbReference type="OrthoDB" id="10006572at2759"/>
<dbReference type="Reactome" id="R-MMU-2032785">
    <property type="pathway name" value="YAP1- and WWTR1 (TAZ)-stimulated gene expression"/>
</dbReference>
<dbReference type="Reactome" id="R-MMU-8951671">
    <property type="pathway name" value="RUNX3 regulates YAP1-mediated transcription"/>
</dbReference>
<dbReference type="BioGRID-ORCS" id="21678">
    <property type="hits" value="4 hits in 77 CRISPR screens"/>
</dbReference>
<dbReference type="ChiTaRS" id="Tead3">
    <property type="organism name" value="mouse"/>
</dbReference>
<dbReference type="PRO" id="PR:P70210"/>
<dbReference type="Proteomes" id="UP000000589">
    <property type="component" value="Chromosome 17"/>
</dbReference>
<dbReference type="RNAct" id="P70210">
    <property type="molecule type" value="protein"/>
</dbReference>
<dbReference type="Bgee" id="ENSMUSG00000002249">
    <property type="expression patterns" value="Expressed in lip and 221 other cell types or tissues"/>
</dbReference>
<dbReference type="ExpressionAtlas" id="P70210">
    <property type="expression patterns" value="baseline and differential"/>
</dbReference>
<dbReference type="GO" id="GO:0005634">
    <property type="term" value="C:nucleus"/>
    <property type="evidence" value="ECO:0007669"/>
    <property type="project" value="UniProtKB-SubCell"/>
</dbReference>
<dbReference type="GO" id="GO:0005667">
    <property type="term" value="C:transcription regulator complex"/>
    <property type="evidence" value="ECO:0000316"/>
    <property type="project" value="MGI"/>
</dbReference>
<dbReference type="GO" id="GO:0003677">
    <property type="term" value="F:DNA binding"/>
    <property type="evidence" value="ECO:0000314"/>
    <property type="project" value="MGI"/>
</dbReference>
<dbReference type="GO" id="GO:0003700">
    <property type="term" value="F:DNA-binding transcription factor activity"/>
    <property type="evidence" value="ECO:0007669"/>
    <property type="project" value="InterPro"/>
</dbReference>
<dbReference type="GO" id="GO:0035329">
    <property type="term" value="P:hippo signaling"/>
    <property type="evidence" value="ECO:0007669"/>
    <property type="project" value="InterPro"/>
</dbReference>
<dbReference type="GO" id="GO:1902459">
    <property type="term" value="P:positive regulation of stem cell population maintenance"/>
    <property type="evidence" value="ECO:0000316"/>
    <property type="project" value="MGI"/>
</dbReference>
<dbReference type="GO" id="GO:0045944">
    <property type="term" value="P:positive regulation of transcription by RNA polymerase II"/>
    <property type="evidence" value="ECO:0000314"/>
    <property type="project" value="MGI"/>
</dbReference>
<dbReference type="FunFam" id="2.70.50.80:FF:000001">
    <property type="entry name" value="Transcriptional enhancer factor TEF-1, putative"/>
    <property type="match status" value="1"/>
</dbReference>
<dbReference type="Gene3D" id="2.70.50.80">
    <property type="match status" value="1"/>
</dbReference>
<dbReference type="Gene3D" id="6.10.20.40">
    <property type="entry name" value="TEA/ATTS domain"/>
    <property type="match status" value="1"/>
</dbReference>
<dbReference type="InterPro" id="IPR000818">
    <property type="entry name" value="TEA/ATTS_dom"/>
</dbReference>
<dbReference type="InterPro" id="IPR038096">
    <property type="entry name" value="TEA/ATTS_sf"/>
</dbReference>
<dbReference type="InterPro" id="IPR050937">
    <property type="entry name" value="TEC1_TEAD_TF"/>
</dbReference>
<dbReference type="InterPro" id="IPR027253">
    <property type="entry name" value="TEF-5"/>
</dbReference>
<dbReference type="InterPro" id="IPR016361">
    <property type="entry name" value="TEF_metazoa"/>
</dbReference>
<dbReference type="InterPro" id="IPR041086">
    <property type="entry name" value="YBD"/>
</dbReference>
<dbReference type="PANTHER" id="PTHR11834">
    <property type="entry name" value="TRANSCRIPTIONAL ENHANCER FACTOR TEF RELATED"/>
    <property type="match status" value="1"/>
</dbReference>
<dbReference type="PANTHER" id="PTHR11834:SF7">
    <property type="entry name" value="TRANSCRIPTIONAL ENHANCER FACTOR TEF-5"/>
    <property type="match status" value="1"/>
</dbReference>
<dbReference type="Pfam" id="PF01285">
    <property type="entry name" value="TEA"/>
    <property type="match status" value="1"/>
</dbReference>
<dbReference type="Pfam" id="PF17725">
    <property type="entry name" value="YBD"/>
    <property type="match status" value="1"/>
</dbReference>
<dbReference type="PIRSF" id="PIRSF002603">
    <property type="entry name" value="TEF"/>
    <property type="match status" value="1"/>
</dbReference>
<dbReference type="PIRSF" id="PIRSF500720">
    <property type="entry name" value="TEF-5"/>
    <property type="match status" value="1"/>
</dbReference>
<dbReference type="PRINTS" id="PR00065">
    <property type="entry name" value="TEADOMAIN"/>
</dbReference>
<dbReference type="SMART" id="SM00426">
    <property type="entry name" value="TEA"/>
    <property type="match status" value="1"/>
</dbReference>
<dbReference type="PROSITE" id="PS00554">
    <property type="entry name" value="TEA_1"/>
    <property type="match status" value="1"/>
</dbReference>
<dbReference type="PROSITE" id="PS51088">
    <property type="entry name" value="TEA_2"/>
    <property type="match status" value="1"/>
</dbReference>
<organism>
    <name type="scientific">Mus musculus</name>
    <name type="common">Mouse</name>
    <dbReference type="NCBI Taxonomy" id="10090"/>
    <lineage>
        <taxon>Eukaryota</taxon>
        <taxon>Metazoa</taxon>
        <taxon>Chordata</taxon>
        <taxon>Craniata</taxon>
        <taxon>Vertebrata</taxon>
        <taxon>Euteleostomi</taxon>
        <taxon>Mammalia</taxon>
        <taxon>Eutheria</taxon>
        <taxon>Euarchontoglires</taxon>
        <taxon>Glires</taxon>
        <taxon>Rodentia</taxon>
        <taxon>Myomorpha</taxon>
        <taxon>Muroidea</taxon>
        <taxon>Muridae</taxon>
        <taxon>Murinae</taxon>
        <taxon>Mus</taxon>
        <taxon>Mus</taxon>
    </lineage>
</organism>
<reference key="1">
    <citation type="journal article" date="1996" name="Biochem. Biophys. Res. Commun.">
        <title>A novel family of TEA domain-containing transcription factors with distinct spatiotemporal expression patterns.</title>
        <authorList>
            <person name="Yasunami M."/>
            <person name="Suzuki K."/>
            <person name="Ohkubo H."/>
        </authorList>
    </citation>
    <scope>NUCLEOTIDE SEQUENCE [MRNA]</scope>
    <source>
        <strain>FVB/N</strain>
        <strain>ICR X Swiss Webster</strain>
        <tissue>Embryo</tissue>
    </source>
</reference>
<reference key="2">
    <citation type="submission" date="1996-12" db="EMBL/GenBank/DDBJ databases">
        <authorList>
            <person name="Kaneko K.J."/>
            <person name="DePamphilis M.L."/>
        </authorList>
    </citation>
    <scope>NUCLEOTIDE SEQUENCE [MRNA]</scope>
    <source>
        <tissue>Carcinoma</tissue>
    </source>
</reference>
<reference key="3">
    <citation type="journal article" date="1998" name="DNA Cell Biol.">
        <title>cDNA cloning and characterization of mouse DTEF-1 and ETF, members of the TEA/ATTS family of transcription factors.</title>
        <authorList>
            <person name="Yockey C.E."/>
            <person name="Shimizu N."/>
        </authorList>
    </citation>
    <scope>NUCLEOTIDE SEQUENCE [MRNA]</scope>
    <source>
        <strain>NIH Swiss</strain>
        <tissue>Heart</tissue>
    </source>
</reference>
<reference key="4">
    <citation type="journal article" date="1998" name="Dev. Dyn.">
        <title>Differential expression of the TEF family of transcription factors in the murine placenta and during differentiation of primary human trophoblasts in vitro.</title>
        <authorList>
            <person name="Jacquemin P."/>
            <person name="Sapin V."/>
            <person name="Alsat E."/>
            <person name="Evain-Brion D."/>
            <person name="Dolle P."/>
            <person name="Davidson I."/>
        </authorList>
    </citation>
    <scope>NUCLEOTIDE SEQUENCE [MRNA]</scope>
    <source>
        <tissue>Placenta</tissue>
    </source>
</reference>
<feature type="initiator methionine" description="Removed" evidence="2">
    <location>
        <position position="1"/>
    </location>
</feature>
<feature type="chain" id="PRO_0000205935" description="Transcriptional enhancer factor TEF-5">
    <location>
        <begin position="2"/>
        <end position="439"/>
    </location>
</feature>
<feature type="DNA-binding region" description="TEA" evidence="4">
    <location>
        <begin position="28"/>
        <end position="104"/>
    </location>
</feature>
<feature type="region of interest" description="Disordered" evidence="5">
    <location>
        <begin position="1"/>
        <end position="34"/>
    </location>
</feature>
<feature type="region of interest" description="Transcriptional activation" evidence="3">
    <location>
        <begin position="173"/>
        <end position="439"/>
    </location>
</feature>
<feature type="compositionally biased region" description="Polar residues" evidence="5">
    <location>
        <begin position="1"/>
        <end position="12"/>
    </location>
</feature>
<feature type="compositionally biased region" description="Basic and acidic residues" evidence="5">
    <location>
        <begin position="14"/>
        <end position="28"/>
    </location>
</feature>
<feature type="modified residue" description="N-acetylalanine" evidence="2">
    <location>
        <position position="2"/>
    </location>
</feature>
<feature type="modified residue" description="Phosphoserine" evidence="2">
    <location>
        <position position="148"/>
    </location>
</feature>
<feature type="sequence variant">
    <original>R</original>
    <variation>G</variation>
    <location>
        <position position="87"/>
    </location>
</feature>
<gene>
    <name type="primary">Tead3</name>
    <name type="synonym">Tcf13r2</name>
    <name type="synonym">Tef5</name>
</gene>
<protein>
    <recommendedName>
        <fullName>Transcriptional enhancer factor TEF-5</fullName>
    </recommendedName>
    <alternativeName>
        <fullName>DTEF-1</fullName>
    </alternativeName>
    <alternativeName>
        <fullName>ETF-related factor 1</fullName>
        <shortName>ETFR-1</shortName>
    </alternativeName>
    <alternativeName>
        <fullName>TEA domain family member 3</fullName>
        <shortName>TEAD-3</shortName>
    </alternativeName>
</protein>